<gene>
    <name evidence="1" type="primary">rpmC</name>
    <name type="ordered locus">CKO_04726</name>
</gene>
<keyword id="KW-1185">Reference proteome</keyword>
<keyword id="KW-0687">Ribonucleoprotein</keyword>
<keyword id="KW-0689">Ribosomal protein</keyword>
<accession>A8AQK8</accession>
<proteinExistence type="inferred from homology"/>
<evidence type="ECO:0000255" key="1">
    <source>
        <dbReference type="HAMAP-Rule" id="MF_00374"/>
    </source>
</evidence>
<evidence type="ECO:0000305" key="2"/>
<reference key="1">
    <citation type="submission" date="2007-08" db="EMBL/GenBank/DDBJ databases">
        <authorList>
            <consortium name="The Citrobacter koseri Genome Sequencing Project"/>
            <person name="McClelland M."/>
            <person name="Sanderson E.K."/>
            <person name="Porwollik S."/>
            <person name="Spieth J."/>
            <person name="Clifton W.S."/>
            <person name="Latreille P."/>
            <person name="Courtney L."/>
            <person name="Wang C."/>
            <person name="Pepin K."/>
            <person name="Bhonagiri V."/>
            <person name="Nash W."/>
            <person name="Johnson M."/>
            <person name="Thiruvilangam P."/>
            <person name="Wilson R."/>
        </authorList>
    </citation>
    <scope>NUCLEOTIDE SEQUENCE [LARGE SCALE GENOMIC DNA]</scope>
    <source>
        <strain>ATCC BAA-895 / CDC 4225-83 / SGSC4696</strain>
    </source>
</reference>
<dbReference type="EMBL" id="CP000822">
    <property type="protein sequence ID" value="ABV15771.1"/>
    <property type="molecule type" value="Genomic_DNA"/>
</dbReference>
<dbReference type="RefSeq" id="WP_000644742.1">
    <property type="nucleotide sequence ID" value="NC_009792.1"/>
</dbReference>
<dbReference type="SMR" id="A8AQK8"/>
<dbReference type="STRING" id="290338.CKO_04726"/>
<dbReference type="GeneID" id="93035739"/>
<dbReference type="KEGG" id="cko:CKO_04726"/>
<dbReference type="HOGENOM" id="CLU_158491_1_2_6"/>
<dbReference type="OrthoDB" id="9815192at2"/>
<dbReference type="Proteomes" id="UP000008148">
    <property type="component" value="Chromosome"/>
</dbReference>
<dbReference type="GO" id="GO:0022625">
    <property type="term" value="C:cytosolic large ribosomal subunit"/>
    <property type="evidence" value="ECO:0007669"/>
    <property type="project" value="TreeGrafter"/>
</dbReference>
<dbReference type="GO" id="GO:0003735">
    <property type="term" value="F:structural constituent of ribosome"/>
    <property type="evidence" value="ECO:0007669"/>
    <property type="project" value="InterPro"/>
</dbReference>
<dbReference type="GO" id="GO:0006412">
    <property type="term" value="P:translation"/>
    <property type="evidence" value="ECO:0007669"/>
    <property type="project" value="UniProtKB-UniRule"/>
</dbReference>
<dbReference type="CDD" id="cd00427">
    <property type="entry name" value="Ribosomal_L29_HIP"/>
    <property type="match status" value="1"/>
</dbReference>
<dbReference type="Gene3D" id="6.10.140.1970">
    <property type="match status" value="1"/>
</dbReference>
<dbReference type="HAMAP" id="MF_00374">
    <property type="entry name" value="Ribosomal_uL29"/>
    <property type="match status" value="1"/>
</dbReference>
<dbReference type="InterPro" id="IPR050063">
    <property type="entry name" value="Ribosomal_protein_uL29"/>
</dbReference>
<dbReference type="InterPro" id="IPR001854">
    <property type="entry name" value="Ribosomal_uL29"/>
</dbReference>
<dbReference type="InterPro" id="IPR018254">
    <property type="entry name" value="Ribosomal_uL29_CS"/>
</dbReference>
<dbReference type="InterPro" id="IPR036049">
    <property type="entry name" value="Ribosomal_uL29_sf"/>
</dbReference>
<dbReference type="NCBIfam" id="TIGR00012">
    <property type="entry name" value="L29"/>
    <property type="match status" value="1"/>
</dbReference>
<dbReference type="PANTHER" id="PTHR10916">
    <property type="entry name" value="60S RIBOSOMAL PROTEIN L35/50S RIBOSOMAL PROTEIN L29"/>
    <property type="match status" value="1"/>
</dbReference>
<dbReference type="PANTHER" id="PTHR10916:SF0">
    <property type="entry name" value="LARGE RIBOSOMAL SUBUNIT PROTEIN UL29C"/>
    <property type="match status" value="1"/>
</dbReference>
<dbReference type="Pfam" id="PF00831">
    <property type="entry name" value="Ribosomal_L29"/>
    <property type="match status" value="1"/>
</dbReference>
<dbReference type="SUPFAM" id="SSF46561">
    <property type="entry name" value="Ribosomal protein L29 (L29p)"/>
    <property type="match status" value="1"/>
</dbReference>
<dbReference type="PROSITE" id="PS00579">
    <property type="entry name" value="RIBOSOMAL_L29"/>
    <property type="match status" value="1"/>
</dbReference>
<sequence length="63" mass="7260">MKAKELREKSVEELNTELLNLLREQFNLRMQAASGQLQQSHLLKQVRRDVARVKTLLTEKAGA</sequence>
<name>RL29_CITK8</name>
<feature type="chain" id="PRO_1000007455" description="Large ribosomal subunit protein uL29">
    <location>
        <begin position="1"/>
        <end position="63"/>
    </location>
</feature>
<comment type="similarity">
    <text evidence="1">Belongs to the universal ribosomal protein uL29 family.</text>
</comment>
<organism>
    <name type="scientific">Citrobacter koseri (strain ATCC BAA-895 / CDC 4225-83 / SGSC4696)</name>
    <dbReference type="NCBI Taxonomy" id="290338"/>
    <lineage>
        <taxon>Bacteria</taxon>
        <taxon>Pseudomonadati</taxon>
        <taxon>Pseudomonadota</taxon>
        <taxon>Gammaproteobacteria</taxon>
        <taxon>Enterobacterales</taxon>
        <taxon>Enterobacteriaceae</taxon>
        <taxon>Citrobacter</taxon>
    </lineage>
</organism>
<protein>
    <recommendedName>
        <fullName evidence="1">Large ribosomal subunit protein uL29</fullName>
    </recommendedName>
    <alternativeName>
        <fullName evidence="2">50S ribosomal protein L29</fullName>
    </alternativeName>
</protein>